<evidence type="ECO:0000256" key="1">
    <source>
        <dbReference type="SAM" id="MobiDB-lite"/>
    </source>
</evidence>
<evidence type="ECO:0000305" key="2"/>
<name>PF20_CHLRE</name>
<gene>
    <name type="primary">PF20</name>
</gene>
<reference key="1">
    <citation type="submission" date="1996-11" db="EMBL/GenBank/DDBJ databases">
        <authorList>
            <person name="Smith E."/>
            <person name="Lefebvre P."/>
        </authorList>
    </citation>
    <scope>NUCLEOTIDE SEQUENCE [MRNA]</scope>
</reference>
<comment type="subunit">
    <text>Inter-microtubule bridges in flagella.</text>
</comment>
<comment type="subcellular location">
    <subcellularLocation>
        <location evidence="2">Cell projection</location>
        <location evidence="2">Cilium</location>
        <location evidence="2">Flagellum</location>
    </subcellularLocation>
</comment>
<sequence>MAAAGLDTLRLEDSDDDFKYEEVDVMSDGEDDASEDLDAALRKLQQFTSKQEAATGPARTTEVKPGQVVKKPEVIDDFLRNFFIKMGLSRTCECFEAEWYELKATGRLDNSTTVPDVYLRNAELEDDVAGLRRELAEAKSIAGRASATWDKFRKERDFHRMHHKRVAQEKNKLLTDLRRLKEHYAKYEPTILELKKKYETLMKEKMMMSLERDKLAARVDALEQVASSPLPGAERSLGGQSTAAAGGGASGRALGATNRALTGDVPPAAGAAAAAATGRSGAVSAGPRSGWASLNAPPRRNPYADLEFPAAPVKMLSLNKTFKGHLLSVANLALHPTKPILVTASDDKTWKMWHMPGGDLIMCGEGHKDWVAGVDFHPAGTCLASGGGDSAVKIWDFEKQRCVTTFTDHKQAIWSVRFHHLGEVVASGSLDHTVRLWDLPAGKCRMALRGHVDSVNDLAWQPFSSSLATASSDKTVSVWDARAGLCTQTYYGHQNSCNGVSFNILGTQLASTDADGVVKLWDTRMTAEVATINTGKHPANKSCFDRSGQVLAVACDDGKVKAYSTTDGVLQAELAGHEDAVQAVLFDPAGQYLVSCGSDNTFRLWS</sequence>
<proteinExistence type="evidence at protein level"/>
<feature type="chain" id="PRO_0000051121" description="Flagellar WD repeat-containing protein Pf20">
    <location>
        <begin position="1"/>
        <end position="606"/>
    </location>
</feature>
<feature type="repeat" description="WD 1">
    <location>
        <begin position="324"/>
        <end position="354"/>
    </location>
</feature>
<feature type="repeat" description="WD 2">
    <location>
        <begin position="366"/>
        <end position="396"/>
    </location>
</feature>
<feature type="repeat" description="WD 3">
    <location>
        <begin position="408"/>
        <end position="438"/>
    </location>
</feature>
<feature type="repeat" description="WD 4">
    <location>
        <begin position="450"/>
        <end position="480"/>
    </location>
</feature>
<feature type="repeat" description="WD 5">
    <location>
        <begin position="492"/>
        <end position="522"/>
    </location>
</feature>
<feature type="repeat" description="WD 6">
    <location>
        <begin position="534"/>
        <end position="564"/>
    </location>
</feature>
<feature type="repeat" description="WD 7">
    <location>
        <begin position="576"/>
        <end position="606"/>
    </location>
</feature>
<feature type="region of interest" description="Disordered" evidence="1">
    <location>
        <begin position="229"/>
        <end position="250"/>
    </location>
</feature>
<organism>
    <name type="scientific">Chlamydomonas reinhardtii</name>
    <name type="common">Chlamydomonas smithii</name>
    <dbReference type="NCBI Taxonomy" id="3055"/>
    <lineage>
        <taxon>Eukaryota</taxon>
        <taxon>Viridiplantae</taxon>
        <taxon>Chlorophyta</taxon>
        <taxon>core chlorophytes</taxon>
        <taxon>Chlorophyceae</taxon>
        <taxon>CS clade</taxon>
        <taxon>Chlamydomonadales</taxon>
        <taxon>Chlamydomonadaceae</taxon>
        <taxon>Chlamydomonas</taxon>
    </lineage>
</organism>
<protein>
    <recommendedName>
        <fullName>Flagellar WD repeat-containing protein Pf20</fullName>
    </recommendedName>
</protein>
<accession>P93107</accession>
<keyword id="KW-0002">3D-structure</keyword>
<keyword id="KW-0966">Cell projection</keyword>
<keyword id="KW-0969">Cilium</keyword>
<keyword id="KW-0282">Flagellum</keyword>
<keyword id="KW-0677">Repeat</keyword>
<keyword id="KW-0853">WD repeat</keyword>
<dbReference type="EMBL" id="U78547">
    <property type="protein sequence ID" value="AAB41727.1"/>
    <property type="molecule type" value="mRNA"/>
</dbReference>
<dbReference type="PIR" id="T08180">
    <property type="entry name" value="T08180"/>
</dbReference>
<dbReference type="PDB" id="7N61">
    <property type="method" value="EM"/>
    <property type="resolution" value="3.50 A"/>
    <property type="chains" value="0A/0B/0C/0D=1-606"/>
</dbReference>
<dbReference type="PDB" id="7SOM">
    <property type="method" value="EM"/>
    <property type="resolution" value="3.70 A"/>
    <property type="chains" value="T/U/V/W=181-231"/>
</dbReference>
<dbReference type="PDBsum" id="7N61"/>
<dbReference type="PDBsum" id="7SOM"/>
<dbReference type="EMDB" id="EMD-24191"/>
<dbReference type="EMDB" id="EMD-25361"/>
<dbReference type="SMR" id="P93107"/>
<dbReference type="PaxDb" id="3055-EDP04185"/>
<dbReference type="GO" id="GO:0031514">
    <property type="term" value="C:motile cilium"/>
    <property type="evidence" value="ECO:0007669"/>
    <property type="project" value="UniProtKB-SubCell"/>
</dbReference>
<dbReference type="CDD" id="cd00200">
    <property type="entry name" value="WD40"/>
    <property type="match status" value="1"/>
</dbReference>
<dbReference type="Gene3D" id="2.130.10.10">
    <property type="entry name" value="YVTN repeat-like/Quinoprotein amine dehydrogenase"/>
    <property type="match status" value="2"/>
</dbReference>
<dbReference type="InterPro" id="IPR020472">
    <property type="entry name" value="G-protein_beta_WD-40_rep"/>
</dbReference>
<dbReference type="InterPro" id="IPR050995">
    <property type="entry name" value="WD-F-box_domain-protein"/>
</dbReference>
<dbReference type="InterPro" id="IPR015943">
    <property type="entry name" value="WD40/YVTN_repeat-like_dom_sf"/>
</dbReference>
<dbReference type="InterPro" id="IPR019775">
    <property type="entry name" value="WD40_repeat_CS"/>
</dbReference>
<dbReference type="InterPro" id="IPR036322">
    <property type="entry name" value="WD40_repeat_dom_sf"/>
</dbReference>
<dbReference type="InterPro" id="IPR001680">
    <property type="entry name" value="WD40_rpt"/>
</dbReference>
<dbReference type="PANTHER" id="PTHR14604:SF3">
    <property type="entry name" value="SPERM-ASSOCIATED ANTIGEN 16 PROTEIN"/>
    <property type="match status" value="1"/>
</dbReference>
<dbReference type="PANTHER" id="PTHR14604">
    <property type="entry name" value="WD40 REPEAT PF20"/>
    <property type="match status" value="1"/>
</dbReference>
<dbReference type="Pfam" id="PF00400">
    <property type="entry name" value="WD40"/>
    <property type="match status" value="6"/>
</dbReference>
<dbReference type="PRINTS" id="PR00320">
    <property type="entry name" value="GPROTEINBRPT"/>
</dbReference>
<dbReference type="SMART" id="SM00320">
    <property type="entry name" value="WD40"/>
    <property type="match status" value="7"/>
</dbReference>
<dbReference type="SUPFAM" id="SSF50978">
    <property type="entry name" value="WD40 repeat-like"/>
    <property type="match status" value="1"/>
</dbReference>
<dbReference type="PROSITE" id="PS00678">
    <property type="entry name" value="WD_REPEATS_1"/>
    <property type="match status" value="4"/>
</dbReference>
<dbReference type="PROSITE" id="PS50082">
    <property type="entry name" value="WD_REPEATS_2"/>
    <property type="match status" value="6"/>
</dbReference>
<dbReference type="PROSITE" id="PS50294">
    <property type="entry name" value="WD_REPEATS_REGION"/>
    <property type="match status" value="1"/>
</dbReference>